<reference key="1">
    <citation type="submission" date="2008-04" db="EMBL/GenBank/DDBJ databases">
        <title>Complete sequence of chromosome 2 of Burkholderia ambifaria MC40-6.</title>
        <authorList>
            <person name="Copeland A."/>
            <person name="Lucas S."/>
            <person name="Lapidus A."/>
            <person name="Glavina del Rio T."/>
            <person name="Dalin E."/>
            <person name="Tice H."/>
            <person name="Pitluck S."/>
            <person name="Chain P."/>
            <person name="Malfatti S."/>
            <person name="Shin M."/>
            <person name="Vergez L."/>
            <person name="Lang D."/>
            <person name="Schmutz J."/>
            <person name="Larimer F."/>
            <person name="Land M."/>
            <person name="Hauser L."/>
            <person name="Kyrpides N."/>
            <person name="Lykidis A."/>
            <person name="Ramette A."/>
            <person name="Konstantinidis K."/>
            <person name="Tiedje J."/>
            <person name="Richardson P."/>
        </authorList>
    </citation>
    <scope>NUCLEOTIDE SEQUENCE [LARGE SCALE GENOMIC DNA]</scope>
    <source>
        <strain>MC40-6</strain>
    </source>
</reference>
<name>ADC_BURA4</name>
<protein>
    <recommendedName>
        <fullName evidence="1">Acetoacetate decarboxylase</fullName>
        <shortName evidence="1">AAD</shortName>
        <shortName evidence="1">ADC</shortName>
        <ecNumber evidence="1">4.1.1.4</ecNumber>
    </recommendedName>
</protein>
<evidence type="ECO:0000255" key="1">
    <source>
        <dbReference type="HAMAP-Rule" id="MF_00597"/>
    </source>
</evidence>
<sequence length="246" mass="27413">MKISDVRSKAFAMPLTSPAFPMGPYRFVDREFLIITYRTDPDRLREIVPEPLQITEPLVHYEFIRMADSTGFGDYTESGQVIPVEYNGQAGGYTLAMYLDDHPPIAGGRELWGFPKKLASPTLHVNTDHILGTLDYGKVRVATGTMGYKHKDLDIEEQAKRLAGPNFLLKIIPHVDGTARVCELVRYYMQDIKMKGAWTGPASLELAPHALAPVADLPVLEIVEARHIVADLTLGLGEVVYDYLAQ</sequence>
<organism>
    <name type="scientific">Burkholderia ambifaria (strain MC40-6)</name>
    <dbReference type="NCBI Taxonomy" id="398577"/>
    <lineage>
        <taxon>Bacteria</taxon>
        <taxon>Pseudomonadati</taxon>
        <taxon>Pseudomonadota</taxon>
        <taxon>Betaproteobacteria</taxon>
        <taxon>Burkholderiales</taxon>
        <taxon>Burkholderiaceae</taxon>
        <taxon>Burkholderia</taxon>
        <taxon>Burkholderia cepacia complex</taxon>
    </lineage>
</organism>
<feature type="chain" id="PRO_1000129874" description="Acetoacetate decarboxylase">
    <location>
        <begin position="1"/>
        <end position="246"/>
    </location>
</feature>
<feature type="active site" description="Schiff-base intermediate with acetoacetate" evidence="1">
    <location>
        <position position="116"/>
    </location>
</feature>
<comment type="function">
    <text evidence="1">Catalyzes the conversion of acetoacetate to acetone and carbon dioxide.</text>
</comment>
<comment type="catalytic activity">
    <reaction evidence="1">
        <text>acetoacetate + H(+) = acetone + CO2</text>
        <dbReference type="Rhea" id="RHEA:19729"/>
        <dbReference type="ChEBI" id="CHEBI:13705"/>
        <dbReference type="ChEBI" id="CHEBI:15347"/>
        <dbReference type="ChEBI" id="CHEBI:15378"/>
        <dbReference type="ChEBI" id="CHEBI:16526"/>
        <dbReference type="EC" id="4.1.1.4"/>
    </reaction>
</comment>
<comment type="similarity">
    <text evidence="1">Belongs to the ADC family.</text>
</comment>
<accession>B1YXQ0</accession>
<gene>
    <name evidence="1" type="primary">adc</name>
    <name type="ordered locus">BamMC406_3126</name>
</gene>
<keyword id="KW-0210">Decarboxylase</keyword>
<keyword id="KW-0456">Lyase</keyword>
<keyword id="KW-0704">Schiff base</keyword>
<proteinExistence type="inferred from homology"/>
<dbReference type="EC" id="4.1.1.4" evidence="1"/>
<dbReference type="EMBL" id="CP001026">
    <property type="protein sequence ID" value="ACB65600.1"/>
    <property type="molecule type" value="Genomic_DNA"/>
</dbReference>
<dbReference type="RefSeq" id="WP_011659919.1">
    <property type="nucleotide sequence ID" value="NC_010552.1"/>
</dbReference>
<dbReference type="SMR" id="B1YXQ0"/>
<dbReference type="KEGG" id="bac:BamMC406_3126"/>
<dbReference type="HOGENOM" id="CLU_077089_0_0_4"/>
<dbReference type="OrthoDB" id="1633687at2"/>
<dbReference type="Proteomes" id="UP000001680">
    <property type="component" value="Chromosome 2"/>
</dbReference>
<dbReference type="GO" id="GO:0047602">
    <property type="term" value="F:acetoacetate decarboxylase activity"/>
    <property type="evidence" value="ECO:0007669"/>
    <property type="project" value="UniProtKB-UniRule"/>
</dbReference>
<dbReference type="Gene3D" id="2.40.400.10">
    <property type="entry name" value="Acetoacetate decarboxylase-like"/>
    <property type="match status" value="1"/>
</dbReference>
<dbReference type="HAMAP" id="MF_00597">
    <property type="entry name" value="ADC"/>
    <property type="match status" value="1"/>
</dbReference>
<dbReference type="InterPro" id="IPR010451">
    <property type="entry name" value="Acetoacetate_decarboxylase"/>
</dbReference>
<dbReference type="InterPro" id="IPR023653">
    <property type="entry name" value="Acetoacetate_decarboxylase_bac"/>
</dbReference>
<dbReference type="InterPro" id="IPR023375">
    <property type="entry name" value="ADC_dom_sf"/>
</dbReference>
<dbReference type="NCBIfam" id="NF002614">
    <property type="entry name" value="PRK02265.1"/>
    <property type="match status" value="1"/>
</dbReference>
<dbReference type="Pfam" id="PF06314">
    <property type="entry name" value="ADC"/>
    <property type="match status" value="1"/>
</dbReference>
<dbReference type="SUPFAM" id="SSF160104">
    <property type="entry name" value="Acetoacetate decarboxylase-like"/>
    <property type="match status" value="1"/>
</dbReference>